<feature type="chain" id="PRO_0000264747" description="Acetylglutamate kinase">
    <location>
        <begin position="1"/>
        <end position="298"/>
    </location>
</feature>
<feature type="binding site" evidence="1">
    <location>
        <begin position="69"/>
        <end position="70"/>
    </location>
    <ligand>
        <name>substrate</name>
    </ligand>
</feature>
<feature type="binding site" evidence="1">
    <location>
        <position position="91"/>
    </location>
    <ligand>
        <name>substrate</name>
    </ligand>
</feature>
<feature type="binding site" evidence="1">
    <location>
        <position position="196"/>
    </location>
    <ligand>
        <name>substrate</name>
    </ligand>
</feature>
<feature type="site" description="Transition state stabilizer" evidence="1">
    <location>
        <position position="34"/>
    </location>
</feature>
<feature type="site" description="Transition state stabilizer" evidence="1">
    <location>
        <position position="256"/>
    </location>
</feature>
<comment type="function">
    <text evidence="1">Catalyzes the ATP-dependent phosphorylation of N-acetyl-L-glutamate.</text>
</comment>
<comment type="catalytic activity">
    <reaction evidence="1">
        <text>N-acetyl-L-glutamate + ATP = N-acetyl-L-glutamyl 5-phosphate + ADP</text>
        <dbReference type="Rhea" id="RHEA:14629"/>
        <dbReference type="ChEBI" id="CHEBI:30616"/>
        <dbReference type="ChEBI" id="CHEBI:44337"/>
        <dbReference type="ChEBI" id="CHEBI:57936"/>
        <dbReference type="ChEBI" id="CHEBI:456216"/>
        <dbReference type="EC" id="2.7.2.8"/>
    </reaction>
</comment>
<comment type="pathway">
    <text evidence="1">Amino-acid biosynthesis; L-arginine biosynthesis; N(2)-acetyl-L-ornithine from L-glutamate: step 2/4.</text>
</comment>
<comment type="subcellular location">
    <subcellularLocation>
        <location evidence="1">Cytoplasm</location>
    </subcellularLocation>
</comment>
<comment type="similarity">
    <text evidence="1">Belongs to the acetylglutamate kinase family. ArgB subfamily.</text>
</comment>
<name>ARGB_RHOPB</name>
<gene>
    <name evidence="1" type="primary">argB</name>
    <name type="ordered locus">RPC_0814</name>
</gene>
<accession>Q21B51</accession>
<organism>
    <name type="scientific">Rhodopseudomonas palustris (strain BisB18)</name>
    <dbReference type="NCBI Taxonomy" id="316056"/>
    <lineage>
        <taxon>Bacteria</taxon>
        <taxon>Pseudomonadati</taxon>
        <taxon>Pseudomonadota</taxon>
        <taxon>Alphaproteobacteria</taxon>
        <taxon>Hyphomicrobiales</taxon>
        <taxon>Nitrobacteraceae</taxon>
        <taxon>Rhodopseudomonas</taxon>
    </lineage>
</organism>
<dbReference type="EC" id="2.7.2.8" evidence="1"/>
<dbReference type="EMBL" id="CP000301">
    <property type="protein sequence ID" value="ABD86385.1"/>
    <property type="molecule type" value="Genomic_DNA"/>
</dbReference>
<dbReference type="SMR" id="Q21B51"/>
<dbReference type="STRING" id="316056.RPC_0814"/>
<dbReference type="KEGG" id="rpc:RPC_0814"/>
<dbReference type="eggNOG" id="COG0548">
    <property type="taxonomic scope" value="Bacteria"/>
</dbReference>
<dbReference type="HOGENOM" id="CLU_053680_0_0_5"/>
<dbReference type="OrthoDB" id="9803155at2"/>
<dbReference type="UniPathway" id="UPA00068">
    <property type="reaction ID" value="UER00107"/>
</dbReference>
<dbReference type="GO" id="GO:0005737">
    <property type="term" value="C:cytoplasm"/>
    <property type="evidence" value="ECO:0007669"/>
    <property type="project" value="UniProtKB-SubCell"/>
</dbReference>
<dbReference type="GO" id="GO:0003991">
    <property type="term" value="F:acetylglutamate kinase activity"/>
    <property type="evidence" value="ECO:0007669"/>
    <property type="project" value="UniProtKB-UniRule"/>
</dbReference>
<dbReference type="GO" id="GO:0005524">
    <property type="term" value="F:ATP binding"/>
    <property type="evidence" value="ECO:0007669"/>
    <property type="project" value="UniProtKB-UniRule"/>
</dbReference>
<dbReference type="GO" id="GO:0042450">
    <property type="term" value="P:arginine biosynthetic process via ornithine"/>
    <property type="evidence" value="ECO:0007669"/>
    <property type="project" value="UniProtKB-UniRule"/>
</dbReference>
<dbReference type="GO" id="GO:0006526">
    <property type="term" value="P:L-arginine biosynthetic process"/>
    <property type="evidence" value="ECO:0007669"/>
    <property type="project" value="UniProtKB-UniPathway"/>
</dbReference>
<dbReference type="CDD" id="cd04250">
    <property type="entry name" value="AAK_NAGK-C"/>
    <property type="match status" value="1"/>
</dbReference>
<dbReference type="FunFam" id="3.40.1160.10:FF:000004">
    <property type="entry name" value="Acetylglutamate kinase"/>
    <property type="match status" value="1"/>
</dbReference>
<dbReference type="Gene3D" id="3.40.1160.10">
    <property type="entry name" value="Acetylglutamate kinase-like"/>
    <property type="match status" value="1"/>
</dbReference>
<dbReference type="HAMAP" id="MF_00082">
    <property type="entry name" value="ArgB"/>
    <property type="match status" value="1"/>
</dbReference>
<dbReference type="InterPro" id="IPR036393">
    <property type="entry name" value="AceGlu_kinase-like_sf"/>
</dbReference>
<dbReference type="InterPro" id="IPR004662">
    <property type="entry name" value="AcgluKinase_fam"/>
</dbReference>
<dbReference type="InterPro" id="IPR037528">
    <property type="entry name" value="ArgB"/>
</dbReference>
<dbReference type="InterPro" id="IPR001048">
    <property type="entry name" value="Asp/Glu/Uridylate_kinase"/>
</dbReference>
<dbReference type="InterPro" id="IPR041727">
    <property type="entry name" value="NAGK-C"/>
</dbReference>
<dbReference type="NCBIfam" id="TIGR00761">
    <property type="entry name" value="argB"/>
    <property type="match status" value="1"/>
</dbReference>
<dbReference type="PANTHER" id="PTHR23342">
    <property type="entry name" value="N-ACETYLGLUTAMATE SYNTHASE"/>
    <property type="match status" value="1"/>
</dbReference>
<dbReference type="PANTHER" id="PTHR23342:SF0">
    <property type="entry name" value="N-ACETYLGLUTAMATE SYNTHASE, MITOCHONDRIAL"/>
    <property type="match status" value="1"/>
</dbReference>
<dbReference type="Pfam" id="PF00696">
    <property type="entry name" value="AA_kinase"/>
    <property type="match status" value="1"/>
</dbReference>
<dbReference type="PIRSF" id="PIRSF000728">
    <property type="entry name" value="NAGK"/>
    <property type="match status" value="1"/>
</dbReference>
<dbReference type="SUPFAM" id="SSF53633">
    <property type="entry name" value="Carbamate kinase-like"/>
    <property type="match status" value="1"/>
</dbReference>
<sequence>MTDAPEISPLDQARILSEALPHMQEYDEETIVIKYGGHAMGAEDLAKAFARDIVLLEQTAINPVVVHGGGPQIATMLKRLGIKSEFAAGLRITDAATIEIVEMVLAGSINKQLVGYINEAGGKAVGLCGKDGNMVSATKATRTMVDPDSRIEEVIDLGFVGEPEKVDLTLLNQLIGHELIPVLAPLATSSSGQTFNVNADTFAGAVAGALKAKRLLLLTDVPGVLDKSKKLIPELSVKDARRLIADGTISGGMIPKVETCIYALEQGVQGVVIIDGKTPHAVLLELFTNQGTGTLIHK</sequence>
<keyword id="KW-0028">Amino-acid biosynthesis</keyword>
<keyword id="KW-0055">Arginine biosynthesis</keyword>
<keyword id="KW-0067">ATP-binding</keyword>
<keyword id="KW-0963">Cytoplasm</keyword>
<keyword id="KW-0418">Kinase</keyword>
<keyword id="KW-0547">Nucleotide-binding</keyword>
<keyword id="KW-0808">Transferase</keyword>
<evidence type="ECO:0000255" key="1">
    <source>
        <dbReference type="HAMAP-Rule" id="MF_00082"/>
    </source>
</evidence>
<reference key="1">
    <citation type="submission" date="2006-03" db="EMBL/GenBank/DDBJ databases">
        <title>Complete sequence of Rhodopseudomonas palustris BisB18.</title>
        <authorList>
            <consortium name="US DOE Joint Genome Institute"/>
            <person name="Copeland A."/>
            <person name="Lucas S."/>
            <person name="Lapidus A."/>
            <person name="Barry K."/>
            <person name="Detter J.C."/>
            <person name="Glavina del Rio T."/>
            <person name="Hammon N."/>
            <person name="Israni S."/>
            <person name="Dalin E."/>
            <person name="Tice H."/>
            <person name="Pitluck S."/>
            <person name="Chain P."/>
            <person name="Malfatti S."/>
            <person name="Shin M."/>
            <person name="Vergez L."/>
            <person name="Schmutz J."/>
            <person name="Larimer F."/>
            <person name="Land M."/>
            <person name="Hauser L."/>
            <person name="Pelletier D.A."/>
            <person name="Kyrpides N."/>
            <person name="Anderson I."/>
            <person name="Oda Y."/>
            <person name="Harwood C.S."/>
            <person name="Richardson P."/>
        </authorList>
    </citation>
    <scope>NUCLEOTIDE SEQUENCE [LARGE SCALE GENOMIC DNA]</scope>
    <source>
        <strain>BisB18</strain>
    </source>
</reference>
<protein>
    <recommendedName>
        <fullName evidence="1">Acetylglutamate kinase</fullName>
        <ecNumber evidence="1">2.7.2.8</ecNumber>
    </recommendedName>
    <alternativeName>
        <fullName evidence="1">N-acetyl-L-glutamate 5-phosphotransferase</fullName>
    </alternativeName>
    <alternativeName>
        <fullName evidence="1">NAG kinase</fullName>
        <shortName evidence="1">NAGK</shortName>
    </alternativeName>
</protein>
<proteinExistence type="inferred from homology"/>